<reference key="1">
    <citation type="journal article" date="2002" name="Nature">
        <title>The genome sequence of Schizosaccharomyces pombe.</title>
        <authorList>
            <person name="Wood V."/>
            <person name="Gwilliam R."/>
            <person name="Rajandream M.A."/>
            <person name="Lyne M.H."/>
            <person name="Lyne R."/>
            <person name="Stewart A."/>
            <person name="Sgouros J.G."/>
            <person name="Peat N."/>
            <person name="Hayles J."/>
            <person name="Baker S.G."/>
            <person name="Basham D."/>
            <person name="Bowman S."/>
            <person name="Brooks K."/>
            <person name="Brown D."/>
            <person name="Brown S."/>
            <person name="Chillingworth T."/>
            <person name="Churcher C.M."/>
            <person name="Collins M."/>
            <person name="Connor R."/>
            <person name="Cronin A."/>
            <person name="Davis P."/>
            <person name="Feltwell T."/>
            <person name="Fraser A."/>
            <person name="Gentles S."/>
            <person name="Goble A."/>
            <person name="Hamlin N."/>
            <person name="Harris D.E."/>
            <person name="Hidalgo J."/>
            <person name="Hodgson G."/>
            <person name="Holroyd S."/>
            <person name="Hornsby T."/>
            <person name="Howarth S."/>
            <person name="Huckle E.J."/>
            <person name="Hunt S."/>
            <person name="Jagels K."/>
            <person name="James K.D."/>
            <person name="Jones L."/>
            <person name="Jones M."/>
            <person name="Leather S."/>
            <person name="McDonald S."/>
            <person name="McLean J."/>
            <person name="Mooney P."/>
            <person name="Moule S."/>
            <person name="Mungall K.L."/>
            <person name="Murphy L.D."/>
            <person name="Niblett D."/>
            <person name="Odell C."/>
            <person name="Oliver K."/>
            <person name="O'Neil S."/>
            <person name="Pearson D."/>
            <person name="Quail M.A."/>
            <person name="Rabbinowitsch E."/>
            <person name="Rutherford K.M."/>
            <person name="Rutter S."/>
            <person name="Saunders D."/>
            <person name="Seeger K."/>
            <person name="Sharp S."/>
            <person name="Skelton J."/>
            <person name="Simmonds M.N."/>
            <person name="Squares R."/>
            <person name="Squares S."/>
            <person name="Stevens K."/>
            <person name="Taylor K."/>
            <person name="Taylor R.G."/>
            <person name="Tivey A."/>
            <person name="Walsh S.V."/>
            <person name="Warren T."/>
            <person name="Whitehead S."/>
            <person name="Woodward J.R."/>
            <person name="Volckaert G."/>
            <person name="Aert R."/>
            <person name="Robben J."/>
            <person name="Grymonprez B."/>
            <person name="Weltjens I."/>
            <person name="Vanstreels E."/>
            <person name="Rieger M."/>
            <person name="Schaefer M."/>
            <person name="Mueller-Auer S."/>
            <person name="Gabel C."/>
            <person name="Fuchs M."/>
            <person name="Duesterhoeft A."/>
            <person name="Fritzc C."/>
            <person name="Holzer E."/>
            <person name="Moestl D."/>
            <person name="Hilbert H."/>
            <person name="Borzym K."/>
            <person name="Langer I."/>
            <person name="Beck A."/>
            <person name="Lehrach H."/>
            <person name="Reinhardt R."/>
            <person name="Pohl T.M."/>
            <person name="Eger P."/>
            <person name="Zimmermann W."/>
            <person name="Wedler H."/>
            <person name="Wambutt R."/>
            <person name="Purnelle B."/>
            <person name="Goffeau A."/>
            <person name="Cadieu E."/>
            <person name="Dreano S."/>
            <person name="Gloux S."/>
            <person name="Lelaure V."/>
            <person name="Mottier S."/>
            <person name="Galibert F."/>
            <person name="Aves S.J."/>
            <person name="Xiang Z."/>
            <person name="Hunt C."/>
            <person name="Moore K."/>
            <person name="Hurst S.M."/>
            <person name="Lucas M."/>
            <person name="Rochet M."/>
            <person name="Gaillardin C."/>
            <person name="Tallada V.A."/>
            <person name="Garzon A."/>
            <person name="Thode G."/>
            <person name="Daga R.R."/>
            <person name="Cruzado L."/>
            <person name="Jimenez J."/>
            <person name="Sanchez M."/>
            <person name="del Rey F."/>
            <person name="Benito J."/>
            <person name="Dominguez A."/>
            <person name="Revuelta J.L."/>
            <person name="Moreno S."/>
            <person name="Armstrong J."/>
            <person name="Forsburg S.L."/>
            <person name="Cerutti L."/>
            <person name="Lowe T."/>
            <person name="McCombie W.R."/>
            <person name="Paulsen I."/>
            <person name="Potashkin J."/>
            <person name="Shpakovski G.V."/>
            <person name="Ussery D."/>
            <person name="Barrell B.G."/>
            <person name="Nurse P."/>
        </authorList>
    </citation>
    <scope>NUCLEOTIDE SEQUENCE [LARGE SCALE GENOMIC DNA]</scope>
    <source>
        <strain>972 / ATCC 24843</strain>
    </source>
</reference>
<reference key="2">
    <citation type="journal article" date="2002" name="Nat. Genet.">
        <title>The transcriptional program of meiosis and sporulation in fission yeast.</title>
        <authorList>
            <person name="Mata J."/>
            <person name="Lyne R."/>
            <person name="Burns G."/>
            <person name="Baehler J."/>
        </authorList>
    </citation>
    <scope>FUNCTION IN MEIOSIS</scope>
</reference>
<reference key="3">
    <citation type="journal article" date="2005" name="Curr. Biol.">
        <title>A large-scale screen in S. pombe identifies seven novel genes required for critical meiotic events.</title>
        <authorList>
            <person name="Martin-Castellanos C."/>
            <person name="Blanco M."/>
            <person name="Rozalen A.E."/>
            <person name="Perez-Hidalgo L."/>
            <person name="Garcia A.I."/>
            <person name="Conde F."/>
            <person name="Mata J."/>
            <person name="Ellermeier C."/>
            <person name="Davis L."/>
            <person name="San-Segundo P."/>
            <person name="Smith G.R."/>
            <person name="Moreno S."/>
        </authorList>
    </citation>
    <scope>FUNCTION IN MEIOSIS/SPORULATION</scope>
</reference>
<reference key="4">
    <citation type="journal article" date="2006" name="Nat. Biotechnol.">
        <title>ORFeome cloning and global analysis of protein localization in the fission yeast Schizosaccharomyces pombe.</title>
        <authorList>
            <person name="Matsuyama A."/>
            <person name="Arai R."/>
            <person name="Yashiroda Y."/>
            <person name="Shirai A."/>
            <person name="Kamata A."/>
            <person name="Sekido S."/>
            <person name="Kobayashi Y."/>
            <person name="Hashimoto A."/>
            <person name="Hamamoto M."/>
            <person name="Hiraoka Y."/>
            <person name="Horinouchi S."/>
            <person name="Yoshida M."/>
        </authorList>
    </citation>
    <scope>SUBCELLULAR LOCATION [LARGE SCALE ANALYSIS]</scope>
</reference>
<organism>
    <name type="scientific">Schizosaccharomyces pombe (strain 972 / ATCC 24843)</name>
    <name type="common">Fission yeast</name>
    <dbReference type="NCBI Taxonomy" id="284812"/>
    <lineage>
        <taxon>Eukaryota</taxon>
        <taxon>Fungi</taxon>
        <taxon>Dikarya</taxon>
        <taxon>Ascomycota</taxon>
        <taxon>Taphrinomycotina</taxon>
        <taxon>Schizosaccharomycetes</taxon>
        <taxon>Schizosaccharomycetales</taxon>
        <taxon>Schizosaccharomycetaceae</taxon>
        <taxon>Schizosaccharomyces</taxon>
    </lineage>
</organism>
<evidence type="ECO:0000255" key="1">
    <source>
        <dbReference type="PROSITE-ProRule" id="PRU00192"/>
    </source>
</evidence>
<evidence type="ECO:0000255" key="2">
    <source>
        <dbReference type="PROSITE-ProRule" id="PRU00361"/>
    </source>
</evidence>
<evidence type="ECO:0000256" key="3">
    <source>
        <dbReference type="SAM" id="MobiDB-lite"/>
    </source>
</evidence>
<evidence type="ECO:0000269" key="4">
    <source>
    </source>
</evidence>
<evidence type="ECO:0000269" key="5">
    <source>
    </source>
</evidence>
<evidence type="ECO:0000269" key="6">
    <source>
    </source>
</evidence>
<protein>
    <recommendedName>
        <fullName>Meiotically up-regulated gene 137 protein</fullName>
    </recommendedName>
</protein>
<gene>
    <name type="primary">mug137</name>
    <name type="ORF">SPCC1919.11</name>
</gene>
<feature type="chain" id="PRO_0000278628" description="Meiotically up-regulated gene 137 protein">
    <location>
        <begin position="1"/>
        <end position="420"/>
    </location>
</feature>
<feature type="domain" description="BAR" evidence="2">
    <location>
        <begin position="10"/>
        <end position="232"/>
    </location>
</feature>
<feature type="domain" description="SH3" evidence="1">
    <location>
        <begin position="279"/>
        <end position="345"/>
    </location>
</feature>
<feature type="region of interest" description="Disordered" evidence="3">
    <location>
        <begin position="398"/>
        <end position="420"/>
    </location>
</feature>
<accession>O94478</accession>
<proteinExistence type="evidence at protein level"/>
<keyword id="KW-0963">Cytoplasm</keyword>
<keyword id="KW-0469">Meiosis</keyword>
<keyword id="KW-0539">Nucleus</keyword>
<keyword id="KW-1185">Reference proteome</keyword>
<keyword id="KW-0728">SH3 domain</keyword>
<comment type="function">
    <text evidence="4 5">Has a role in meiosis and sporulation.</text>
</comment>
<comment type="subcellular location">
    <subcellularLocation>
        <location evidence="6">Cytoplasm</location>
    </subcellularLocation>
    <subcellularLocation>
        <location evidence="6">Nucleus</location>
    </subcellularLocation>
    <text>Localizes at the barrier septum.</text>
</comment>
<sequence>MVSRFFSWTNEKPLGDQRAHLPDSFLELEQEIAIREEGLSKLFQATTIWIDSILKKVDGEDKEKCLACENLGKVMINHSKELPQDSSYGITLSQLGKANLKIGEHQTSLAYKARVCYLDFLKRYLVQAKDFHSARKKLESRRQAYESLLQKSFKEKKEDSRLEEDIRLALYKFEESTEQVKNRMIALKDVEADQYQQLTELIVYELNFFKESTGILNTIFNSQNSLTPQKKIQSSERSVENEFLASPMDPSLSKLFTKTTNTEKISPTPFSTPKRKSKKETVFVKAIYSFTGRNEKELDLHTGDVIQVSEQLGPDWYMGEKVNSKAEKLGNSGMFPVNYCTRIYDLHVQKSHETRSLERARSIRRIVSDDPRDYCSPIKQSPIQNLKFLDSDNSLLSSQNVEASSQPIKIRKPLPEIPNK</sequence>
<name>MU137_SCHPO</name>
<dbReference type="EMBL" id="CU329672">
    <property type="protein sequence ID" value="CAA22642.1"/>
    <property type="molecule type" value="Genomic_DNA"/>
</dbReference>
<dbReference type="PIR" id="T41236">
    <property type="entry name" value="T41236"/>
</dbReference>
<dbReference type="RefSeq" id="NP_588493.1">
    <property type="nucleotide sequence ID" value="NM_001023483.2"/>
</dbReference>
<dbReference type="SMR" id="O94478"/>
<dbReference type="BioGRID" id="275685">
    <property type="interactions" value="6"/>
</dbReference>
<dbReference type="FunCoup" id="O94478">
    <property type="interactions" value="56"/>
</dbReference>
<dbReference type="STRING" id="284812.O94478"/>
<dbReference type="PaxDb" id="4896-SPCC1919.11.1"/>
<dbReference type="EnsemblFungi" id="SPCC1919.11.1">
    <property type="protein sequence ID" value="SPCC1919.11.1:pep"/>
    <property type="gene ID" value="SPCC1919.11"/>
</dbReference>
<dbReference type="GeneID" id="2539113"/>
<dbReference type="KEGG" id="spo:2539113"/>
<dbReference type="PomBase" id="SPCC1919.11">
    <property type="gene designation" value="mug137"/>
</dbReference>
<dbReference type="VEuPathDB" id="FungiDB:SPCC1919.11"/>
<dbReference type="eggNOG" id="KOG1118">
    <property type="taxonomic scope" value="Eukaryota"/>
</dbReference>
<dbReference type="HOGENOM" id="CLU_654094_0_0_1"/>
<dbReference type="InParanoid" id="O94478"/>
<dbReference type="OMA" id="MFPANYC"/>
<dbReference type="PhylomeDB" id="O94478"/>
<dbReference type="Reactome" id="R-SPO-5689901">
    <property type="pathway name" value="Metalloprotease DUBs"/>
</dbReference>
<dbReference type="Reactome" id="R-SPO-9013420">
    <property type="pathway name" value="RHOU GTPase cycle"/>
</dbReference>
<dbReference type="PRO" id="PR:O94478"/>
<dbReference type="Proteomes" id="UP000002485">
    <property type="component" value="Chromosome III"/>
</dbReference>
<dbReference type="GO" id="GO:0032153">
    <property type="term" value="C:cell division site"/>
    <property type="evidence" value="ECO:0007005"/>
    <property type="project" value="PomBase"/>
</dbReference>
<dbReference type="GO" id="GO:0005829">
    <property type="term" value="C:cytosol"/>
    <property type="evidence" value="ECO:0007005"/>
    <property type="project" value="PomBase"/>
</dbReference>
<dbReference type="GO" id="GO:0005634">
    <property type="term" value="C:nucleus"/>
    <property type="evidence" value="ECO:0007005"/>
    <property type="project" value="PomBase"/>
</dbReference>
<dbReference type="GO" id="GO:0008289">
    <property type="term" value="F:lipid binding"/>
    <property type="evidence" value="ECO:0000255"/>
    <property type="project" value="PomBase"/>
</dbReference>
<dbReference type="GO" id="GO:0180020">
    <property type="term" value="F:membrane bending activity"/>
    <property type="evidence" value="ECO:0000304"/>
    <property type="project" value="PomBase"/>
</dbReference>
<dbReference type="GO" id="GO:0006897">
    <property type="term" value="P:endocytosis"/>
    <property type="evidence" value="ECO:0000250"/>
    <property type="project" value="PomBase"/>
</dbReference>
<dbReference type="GO" id="GO:0051321">
    <property type="term" value="P:meiotic cell cycle"/>
    <property type="evidence" value="ECO:0007669"/>
    <property type="project" value="UniProtKB-KW"/>
</dbReference>
<dbReference type="CDD" id="cd07593">
    <property type="entry name" value="BAR_MUG137_fungi"/>
    <property type="match status" value="1"/>
</dbReference>
<dbReference type="CDD" id="cd00174">
    <property type="entry name" value="SH3"/>
    <property type="match status" value="1"/>
</dbReference>
<dbReference type="FunFam" id="1.20.1270.60:FF:000174">
    <property type="entry name" value="Meiotically up-regulated gene 137 protein"/>
    <property type="match status" value="1"/>
</dbReference>
<dbReference type="FunFam" id="2.30.30.40:FF:000418">
    <property type="entry name" value="Meiotically up-regulated gene 137 protein"/>
    <property type="match status" value="1"/>
</dbReference>
<dbReference type="Gene3D" id="1.20.1270.60">
    <property type="entry name" value="Arfaptin homology (AH) domain/BAR domain"/>
    <property type="match status" value="1"/>
</dbReference>
<dbReference type="Gene3D" id="2.30.30.40">
    <property type="entry name" value="SH3 Domains"/>
    <property type="match status" value="1"/>
</dbReference>
<dbReference type="InterPro" id="IPR027267">
    <property type="entry name" value="AH/BAR_dom_sf"/>
</dbReference>
<dbReference type="InterPro" id="IPR004148">
    <property type="entry name" value="BAR_dom"/>
</dbReference>
<dbReference type="InterPro" id="IPR036028">
    <property type="entry name" value="SH3-like_dom_sf"/>
</dbReference>
<dbReference type="InterPro" id="IPR001452">
    <property type="entry name" value="SH3_domain"/>
</dbReference>
<dbReference type="InterPro" id="IPR050670">
    <property type="entry name" value="STAM"/>
</dbReference>
<dbReference type="PANTHER" id="PTHR45929">
    <property type="entry name" value="JAK PATHWAY SIGNAL TRANSDUCTION ADAPTOR MOLECULE"/>
    <property type="match status" value="1"/>
</dbReference>
<dbReference type="PANTHER" id="PTHR45929:SF7">
    <property type="entry name" value="LAS SEVENTEEN-BINDING PROTEIN 1"/>
    <property type="match status" value="1"/>
</dbReference>
<dbReference type="Pfam" id="PF03114">
    <property type="entry name" value="BAR"/>
    <property type="match status" value="1"/>
</dbReference>
<dbReference type="Pfam" id="PF00018">
    <property type="entry name" value="SH3_1"/>
    <property type="match status" value="1"/>
</dbReference>
<dbReference type="SMART" id="SM00721">
    <property type="entry name" value="BAR"/>
    <property type="match status" value="1"/>
</dbReference>
<dbReference type="SMART" id="SM00326">
    <property type="entry name" value="SH3"/>
    <property type="match status" value="1"/>
</dbReference>
<dbReference type="SUPFAM" id="SSF103657">
    <property type="entry name" value="BAR/IMD domain-like"/>
    <property type="match status" value="1"/>
</dbReference>
<dbReference type="SUPFAM" id="SSF50044">
    <property type="entry name" value="SH3-domain"/>
    <property type="match status" value="1"/>
</dbReference>
<dbReference type="PROSITE" id="PS51021">
    <property type="entry name" value="BAR"/>
    <property type="match status" value="1"/>
</dbReference>
<dbReference type="PROSITE" id="PS50002">
    <property type="entry name" value="SH3"/>
    <property type="match status" value="1"/>
</dbReference>